<keyword id="KW-1185">Reference proteome</keyword>
<keyword id="KW-0694">RNA-binding</keyword>
<keyword id="KW-0804">Transcription</keyword>
<keyword id="KW-0889">Transcription antitermination</keyword>
<keyword id="KW-0805">Transcription regulation</keyword>
<reference key="1">
    <citation type="submission" date="2006-12" db="EMBL/GenBank/DDBJ databases">
        <title>Complete sequence of Halorhodospira halophila SL1.</title>
        <authorList>
            <consortium name="US DOE Joint Genome Institute"/>
            <person name="Copeland A."/>
            <person name="Lucas S."/>
            <person name="Lapidus A."/>
            <person name="Barry K."/>
            <person name="Detter J.C."/>
            <person name="Glavina del Rio T."/>
            <person name="Hammon N."/>
            <person name="Israni S."/>
            <person name="Dalin E."/>
            <person name="Tice H."/>
            <person name="Pitluck S."/>
            <person name="Saunders E."/>
            <person name="Brettin T."/>
            <person name="Bruce D."/>
            <person name="Han C."/>
            <person name="Tapia R."/>
            <person name="Schmutz J."/>
            <person name="Larimer F."/>
            <person name="Land M."/>
            <person name="Hauser L."/>
            <person name="Kyrpides N."/>
            <person name="Mikhailova N."/>
            <person name="Hoff W."/>
            <person name="Richardson P."/>
        </authorList>
    </citation>
    <scope>NUCLEOTIDE SEQUENCE [LARGE SCALE GENOMIC DNA]</scope>
    <source>
        <strain>DSM 244 / SL1</strain>
    </source>
</reference>
<accession>A1WVG0</accession>
<protein>
    <recommendedName>
        <fullName evidence="1">Transcription antitermination protein NusB</fullName>
    </recommendedName>
    <alternativeName>
        <fullName evidence="1">Antitermination factor NusB</fullName>
    </alternativeName>
</protein>
<evidence type="ECO:0000255" key="1">
    <source>
        <dbReference type="HAMAP-Rule" id="MF_00073"/>
    </source>
</evidence>
<name>NUSB_HALHL</name>
<comment type="function">
    <text evidence="1">Involved in transcription antitermination. Required for transcription of ribosomal RNA (rRNA) genes. Binds specifically to the boxA antiterminator sequence of the ribosomal RNA (rrn) operons.</text>
</comment>
<comment type="similarity">
    <text evidence="1">Belongs to the NusB family.</text>
</comment>
<gene>
    <name evidence="1" type="primary">nusB</name>
    <name type="ordered locus">Hhal_0896</name>
</gene>
<sequence>MAASGEGKRRSRARSKLVQALYQYAVTGASAEDIERQFLAAGLGDIDVAYFRELIYGVTDRAAELDEQLSALLDRPLVQLDPVERSILRLGAFELSERLEVPYRVVIDESVELARRFGADQSHRYINGVLDRFGATVALRAAERGERKSRRGDRQ</sequence>
<feature type="chain" id="PRO_1000023738" description="Transcription antitermination protein NusB">
    <location>
        <begin position="1"/>
        <end position="155"/>
    </location>
</feature>
<proteinExistence type="inferred from homology"/>
<organism>
    <name type="scientific">Halorhodospira halophila (strain DSM 244 / SL1)</name>
    <name type="common">Ectothiorhodospira halophila (strain DSM 244 / SL1)</name>
    <dbReference type="NCBI Taxonomy" id="349124"/>
    <lineage>
        <taxon>Bacteria</taxon>
        <taxon>Pseudomonadati</taxon>
        <taxon>Pseudomonadota</taxon>
        <taxon>Gammaproteobacteria</taxon>
        <taxon>Chromatiales</taxon>
        <taxon>Ectothiorhodospiraceae</taxon>
        <taxon>Halorhodospira</taxon>
    </lineage>
</organism>
<dbReference type="EMBL" id="CP000544">
    <property type="protein sequence ID" value="ABM61672.1"/>
    <property type="molecule type" value="Genomic_DNA"/>
</dbReference>
<dbReference type="RefSeq" id="WP_011813695.1">
    <property type="nucleotide sequence ID" value="NC_008789.1"/>
</dbReference>
<dbReference type="SMR" id="A1WVG0"/>
<dbReference type="STRING" id="349124.Hhal_0896"/>
<dbReference type="KEGG" id="hha:Hhal_0896"/>
<dbReference type="eggNOG" id="COG0781">
    <property type="taxonomic scope" value="Bacteria"/>
</dbReference>
<dbReference type="HOGENOM" id="CLU_087843_4_1_6"/>
<dbReference type="OrthoDB" id="9789556at2"/>
<dbReference type="Proteomes" id="UP000000647">
    <property type="component" value="Chromosome"/>
</dbReference>
<dbReference type="GO" id="GO:0005829">
    <property type="term" value="C:cytosol"/>
    <property type="evidence" value="ECO:0007669"/>
    <property type="project" value="TreeGrafter"/>
</dbReference>
<dbReference type="GO" id="GO:0003723">
    <property type="term" value="F:RNA binding"/>
    <property type="evidence" value="ECO:0007669"/>
    <property type="project" value="UniProtKB-UniRule"/>
</dbReference>
<dbReference type="GO" id="GO:0006353">
    <property type="term" value="P:DNA-templated transcription termination"/>
    <property type="evidence" value="ECO:0007669"/>
    <property type="project" value="UniProtKB-UniRule"/>
</dbReference>
<dbReference type="GO" id="GO:0031564">
    <property type="term" value="P:transcription antitermination"/>
    <property type="evidence" value="ECO:0007669"/>
    <property type="project" value="UniProtKB-KW"/>
</dbReference>
<dbReference type="Gene3D" id="1.10.940.10">
    <property type="entry name" value="NusB-like"/>
    <property type="match status" value="1"/>
</dbReference>
<dbReference type="HAMAP" id="MF_00073">
    <property type="entry name" value="NusB"/>
    <property type="match status" value="1"/>
</dbReference>
<dbReference type="InterPro" id="IPR035926">
    <property type="entry name" value="NusB-like_sf"/>
</dbReference>
<dbReference type="InterPro" id="IPR011605">
    <property type="entry name" value="NusB_fam"/>
</dbReference>
<dbReference type="InterPro" id="IPR006027">
    <property type="entry name" value="NusB_RsmB_TIM44"/>
</dbReference>
<dbReference type="NCBIfam" id="TIGR01951">
    <property type="entry name" value="nusB"/>
    <property type="match status" value="1"/>
</dbReference>
<dbReference type="PANTHER" id="PTHR11078:SF3">
    <property type="entry name" value="ANTITERMINATION NUSB DOMAIN-CONTAINING PROTEIN"/>
    <property type="match status" value="1"/>
</dbReference>
<dbReference type="PANTHER" id="PTHR11078">
    <property type="entry name" value="N UTILIZATION SUBSTANCE PROTEIN B-RELATED"/>
    <property type="match status" value="1"/>
</dbReference>
<dbReference type="Pfam" id="PF01029">
    <property type="entry name" value="NusB"/>
    <property type="match status" value="1"/>
</dbReference>
<dbReference type="SUPFAM" id="SSF48013">
    <property type="entry name" value="NusB-like"/>
    <property type="match status" value="1"/>
</dbReference>